<dbReference type="EC" id="2.7.7.38" evidence="1"/>
<dbReference type="EMBL" id="CP000267">
    <property type="protein sequence ID" value="ABD70866.1"/>
    <property type="molecule type" value="Genomic_DNA"/>
</dbReference>
<dbReference type="RefSeq" id="WP_011465429.1">
    <property type="nucleotide sequence ID" value="NC_007908.1"/>
</dbReference>
<dbReference type="SMR" id="Q21TN7"/>
<dbReference type="STRING" id="338969.Rfer_3157"/>
<dbReference type="KEGG" id="rfr:Rfer_3157"/>
<dbReference type="eggNOG" id="COG1212">
    <property type="taxonomic scope" value="Bacteria"/>
</dbReference>
<dbReference type="HOGENOM" id="CLU_065038_1_0_4"/>
<dbReference type="OrthoDB" id="9815559at2"/>
<dbReference type="UniPathway" id="UPA00030"/>
<dbReference type="UniPathway" id="UPA00358">
    <property type="reaction ID" value="UER00476"/>
</dbReference>
<dbReference type="Proteomes" id="UP000008332">
    <property type="component" value="Chromosome"/>
</dbReference>
<dbReference type="GO" id="GO:0005829">
    <property type="term" value="C:cytosol"/>
    <property type="evidence" value="ECO:0007669"/>
    <property type="project" value="TreeGrafter"/>
</dbReference>
<dbReference type="GO" id="GO:0008690">
    <property type="term" value="F:3-deoxy-manno-octulosonate cytidylyltransferase activity"/>
    <property type="evidence" value="ECO:0007669"/>
    <property type="project" value="UniProtKB-UniRule"/>
</dbReference>
<dbReference type="GO" id="GO:0033468">
    <property type="term" value="P:CMP-keto-3-deoxy-D-manno-octulosonic acid biosynthetic process"/>
    <property type="evidence" value="ECO:0007669"/>
    <property type="project" value="UniProtKB-UniRule"/>
</dbReference>
<dbReference type="GO" id="GO:0009103">
    <property type="term" value="P:lipopolysaccharide biosynthetic process"/>
    <property type="evidence" value="ECO:0007669"/>
    <property type="project" value="UniProtKB-UniRule"/>
</dbReference>
<dbReference type="CDD" id="cd02517">
    <property type="entry name" value="CMP-KDO-Synthetase"/>
    <property type="match status" value="1"/>
</dbReference>
<dbReference type="FunFam" id="3.90.550.10:FF:000011">
    <property type="entry name" value="3-deoxy-manno-octulosonate cytidylyltransferase"/>
    <property type="match status" value="1"/>
</dbReference>
<dbReference type="Gene3D" id="3.90.550.10">
    <property type="entry name" value="Spore Coat Polysaccharide Biosynthesis Protein SpsA, Chain A"/>
    <property type="match status" value="1"/>
</dbReference>
<dbReference type="HAMAP" id="MF_00057">
    <property type="entry name" value="KdsB"/>
    <property type="match status" value="1"/>
</dbReference>
<dbReference type="InterPro" id="IPR003329">
    <property type="entry name" value="Cytidylyl_trans"/>
</dbReference>
<dbReference type="InterPro" id="IPR004528">
    <property type="entry name" value="KdsB"/>
</dbReference>
<dbReference type="InterPro" id="IPR029044">
    <property type="entry name" value="Nucleotide-diphossugar_trans"/>
</dbReference>
<dbReference type="NCBIfam" id="TIGR00466">
    <property type="entry name" value="kdsB"/>
    <property type="match status" value="1"/>
</dbReference>
<dbReference type="NCBIfam" id="NF003952">
    <property type="entry name" value="PRK05450.1-5"/>
    <property type="match status" value="1"/>
</dbReference>
<dbReference type="NCBIfam" id="NF009905">
    <property type="entry name" value="PRK13368.1"/>
    <property type="match status" value="1"/>
</dbReference>
<dbReference type="PANTHER" id="PTHR42866">
    <property type="entry name" value="3-DEOXY-MANNO-OCTULOSONATE CYTIDYLYLTRANSFERASE"/>
    <property type="match status" value="1"/>
</dbReference>
<dbReference type="PANTHER" id="PTHR42866:SF2">
    <property type="entry name" value="3-DEOXY-MANNO-OCTULOSONATE CYTIDYLYLTRANSFERASE, MITOCHONDRIAL"/>
    <property type="match status" value="1"/>
</dbReference>
<dbReference type="Pfam" id="PF02348">
    <property type="entry name" value="CTP_transf_3"/>
    <property type="match status" value="1"/>
</dbReference>
<dbReference type="SUPFAM" id="SSF53448">
    <property type="entry name" value="Nucleotide-diphospho-sugar transferases"/>
    <property type="match status" value="1"/>
</dbReference>
<gene>
    <name evidence="1" type="primary">kdsB</name>
    <name type="ordered locus">Rfer_3157</name>
</gene>
<proteinExistence type="inferred from homology"/>
<keyword id="KW-0963">Cytoplasm</keyword>
<keyword id="KW-0448">Lipopolysaccharide biosynthesis</keyword>
<keyword id="KW-0548">Nucleotidyltransferase</keyword>
<keyword id="KW-1185">Reference proteome</keyword>
<keyword id="KW-0808">Transferase</keyword>
<name>KDSB_ALBFT</name>
<reference key="1">
    <citation type="submission" date="2006-02" db="EMBL/GenBank/DDBJ databases">
        <title>Complete sequence of chromosome of Rhodoferax ferrireducens DSM 15236.</title>
        <authorList>
            <person name="Copeland A."/>
            <person name="Lucas S."/>
            <person name="Lapidus A."/>
            <person name="Barry K."/>
            <person name="Detter J.C."/>
            <person name="Glavina del Rio T."/>
            <person name="Hammon N."/>
            <person name="Israni S."/>
            <person name="Pitluck S."/>
            <person name="Brettin T."/>
            <person name="Bruce D."/>
            <person name="Han C."/>
            <person name="Tapia R."/>
            <person name="Gilna P."/>
            <person name="Kiss H."/>
            <person name="Schmutz J."/>
            <person name="Larimer F."/>
            <person name="Land M."/>
            <person name="Kyrpides N."/>
            <person name="Ivanova N."/>
            <person name="Richardson P."/>
        </authorList>
    </citation>
    <scope>NUCLEOTIDE SEQUENCE [LARGE SCALE GENOMIC DNA]</scope>
    <source>
        <strain>ATCC BAA-621 / DSM 15236 / T118</strain>
    </source>
</reference>
<comment type="function">
    <text evidence="1">Activates KDO (a required 8-carbon sugar) for incorporation into bacterial lipopolysaccharide in Gram-negative bacteria.</text>
</comment>
<comment type="catalytic activity">
    <reaction evidence="1">
        <text>3-deoxy-alpha-D-manno-oct-2-ulosonate + CTP = CMP-3-deoxy-beta-D-manno-octulosonate + diphosphate</text>
        <dbReference type="Rhea" id="RHEA:23448"/>
        <dbReference type="ChEBI" id="CHEBI:33019"/>
        <dbReference type="ChEBI" id="CHEBI:37563"/>
        <dbReference type="ChEBI" id="CHEBI:85986"/>
        <dbReference type="ChEBI" id="CHEBI:85987"/>
        <dbReference type="EC" id="2.7.7.38"/>
    </reaction>
</comment>
<comment type="pathway">
    <text evidence="1">Nucleotide-sugar biosynthesis; CMP-3-deoxy-D-manno-octulosonate biosynthesis; CMP-3-deoxy-D-manno-octulosonate from 3-deoxy-D-manno-octulosonate and CTP: step 1/1.</text>
</comment>
<comment type="pathway">
    <text evidence="1">Bacterial outer membrane biogenesis; lipopolysaccharide biosynthesis.</text>
</comment>
<comment type="subcellular location">
    <subcellularLocation>
        <location evidence="1">Cytoplasm</location>
    </subcellularLocation>
</comment>
<comment type="similarity">
    <text evidence="1">Belongs to the KdsB family.</text>
</comment>
<evidence type="ECO:0000255" key="1">
    <source>
        <dbReference type="HAMAP-Rule" id="MF_00057"/>
    </source>
</evidence>
<sequence>MTFTVLIPARLASTRLPNKPLADIGGAPMVVRVAQRVLSGAGLAGRVRVVVAGDSPLIIEACQVHGIEAVLTRTDHPSGSDRLAEACDLLRLGDDEIVVNVQGDEPLIDPSLVAAVAGLLLNQPAASMSTAAHAINSEAEFNNRNVVKVVLDAQGLALYFSRAPIPCWRDQPLSANDSAALPSPPPLRHIGLYAYRVGFLRRFPTLAQAPIEITESLEQLRALWHGYRIAVHIAPHAPGPGVDTPEDLERVRHLFGA</sequence>
<accession>Q21TN7</accession>
<feature type="chain" id="PRO_1000091897" description="3-deoxy-manno-octulosonate cytidylyltransferase">
    <location>
        <begin position="1"/>
        <end position="257"/>
    </location>
</feature>
<protein>
    <recommendedName>
        <fullName evidence="1">3-deoxy-manno-octulosonate cytidylyltransferase</fullName>
        <ecNumber evidence="1">2.7.7.38</ecNumber>
    </recommendedName>
    <alternativeName>
        <fullName evidence="1">CMP-2-keto-3-deoxyoctulosonic acid synthase</fullName>
        <shortName evidence="1">CKS</shortName>
        <shortName evidence="1">CMP-KDO synthase</shortName>
    </alternativeName>
</protein>
<organism>
    <name type="scientific">Albidiferax ferrireducens (strain ATCC BAA-621 / DSM 15236 / T118)</name>
    <name type="common">Rhodoferax ferrireducens</name>
    <dbReference type="NCBI Taxonomy" id="338969"/>
    <lineage>
        <taxon>Bacteria</taxon>
        <taxon>Pseudomonadati</taxon>
        <taxon>Pseudomonadota</taxon>
        <taxon>Betaproteobacteria</taxon>
        <taxon>Burkholderiales</taxon>
        <taxon>Comamonadaceae</taxon>
        <taxon>Rhodoferax</taxon>
    </lineage>
</organism>